<accession>Q47163</accession>
<comment type="function">
    <text evidence="1 3">The subtype gamma methyltransferase (M) subunit of a type I restriction enzyme. The M and S subunits together form a methyltransferase (MTase) that methylates two adenine residues of the sequence 5'-CCAN(7)ATGC-3'. In the presence of the R subunit the complex can also act as an endonuclease, binding to the same target sequence but cutting the DNA some distance from this site. Whether the DNA is cut or modified depends on the methylation state of the target sequence. When the target site is unmodified, the DNA is cut. When the target site is hemimethylated, the complex acts as a maintenance MTase modifying the DNA so that both strands become methylated. After locating a non-methylated recognition site, the enzyme complex serves as a molecular motor that translocates DNA in an ATP-dependent manner until a collision occurs that triggers cleavage.</text>
</comment>
<comment type="catalytic activity">
    <reaction evidence="1">
        <text>a 2'-deoxyadenosine in DNA + S-adenosyl-L-methionine = an N(6)-methyl-2'-deoxyadenosine in DNA + S-adenosyl-L-homocysteine + H(+)</text>
        <dbReference type="Rhea" id="RHEA:15197"/>
        <dbReference type="Rhea" id="RHEA-COMP:12418"/>
        <dbReference type="Rhea" id="RHEA-COMP:12419"/>
        <dbReference type="ChEBI" id="CHEBI:15378"/>
        <dbReference type="ChEBI" id="CHEBI:57856"/>
        <dbReference type="ChEBI" id="CHEBI:59789"/>
        <dbReference type="ChEBI" id="CHEBI:90615"/>
        <dbReference type="ChEBI" id="CHEBI:90616"/>
        <dbReference type="EC" id="2.1.1.72"/>
    </reaction>
</comment>
<comment type="subunit">
    <text evidence="1">The type I restriction/modification system is composed of three polypeptides R, M and S; the restriction enzyme has stoichiometry R(2)M(2)S(1) while the methyltransferase is M(2)S(1).</text>
</comment>
<comment type="miscellaneous">
    <text evidence="1">Type I restriction and modification enzymes are complex, multifunctional systems which require ATP, S-adenosyl methionine and Mg(2+) as cofactors and, in addition to their endonucleolytic and methylase activities, are potent DNA-dependent ATPases.</text>
</comment>
<comment type="similarity">
    <text evidence="5">Belongs to the N(4)/N(6)-methyltransferase family.</text>
</comment>
<protein>
    <recommendedName>
        <fullName evidence="5">Type I restriction enzyme EcoprrI methylase subunit</fullName>
        <shortName>M protein</shortName>
        <ecNumber evidence="1">2.1.1.72</ecNumber>
    </recommendedName>
    <alternativeName>
        <fullName evidence="3">Type I methyltransferase M.EcoprrI</fullName>
        <shortName evidence="3">M.EcoprrI</shortName>
    </alternativeName>
</protein>
<proteinExistence type="inferred from homology"/>
<gene>
    <name evidence="4" type="primary">hsdM</name>
</gene>
<keyword id="KW-0238">DNA-binding</keyword>
<keyword id="KW-0489">Methyltransferase</keyword>
<keyword id="KW-0680">Restriction system</keyword>
<keyword id="KW-0949">S-adenosyl-L-methionine</keyword>
<keyword id="KW-0808">Transferase</keyword>
<dbReference type="EC" id="2.1.1.72" evidence="1"/>
<dbReference type="EMBL" id="X75452">
    <property type="protein sequence ID" value="CAA53205.1"/>
    <property type="molecule type" value="Genomic_DNA"/>
</dbReference>
<dbReference type="SMR" id="Q47163"/>
<dbReference type="REBASE" id="3552">
    <property type="entry name" value="M.EcoprrI"/>
</dbReference>
<dbReference type="PRO" id="PR:Q47163"/>
<dbReference type="GO" id="GO:0003677">
    <property type="term" value="F:DNA binding"/>
    <property type="evidence" value="ECO:0007669"/>
    <property type="project" value="UniProtKB-KW"/>
</dbReference>
<dbReference type="GO" id="GO:0008170">
    <property type="term" value="F:N-methyltransferase activity"/>
    <property type="evidence" value="ECO:0007669"/>
    <property type="project" value="InterPro"/>
</dbReference>
<dbReference type="GO" id="GO:0009007">
    <property type="term" value="F:site-specific DNA-methyltransferase (adenine-specific) activity"/>
    <property type="evidence" value="ECO:0007669"/>
    <property type="project" value="UniProtKB-EC"/>
</dbReference>
<dbReference type="GO" id="GO:0009307">
    <property type="term" value="P:DNA restriction-modification system"/>
    <property type="evidence" value="ECO:0007669"/>
    <property type="project" value="UniProtKB-KW"/>
</dbReference>
<dbReference type="GO" id="GO:0032259">
    <property type="term" value="P:methylation"/>
    <property type="evidence" value="ECO:0007669"/>
    <property type="project" value="UniProtKB-KW"/>
</dbReference>
<dbReference type="CDD" id="cd02440">
    <property type="entry name" value="AdoMet_MTases"/>
    <property type="match status" value="1"/>
</dbReference>
<dbReference type="Gene3D" id="1.20.1260.30">
    <property type="match status" value="1"/>
</dbReference>
<dbReference type="Gene3D" id="3.40.50.150">
    <property type="entry name" value="Vaccinia Virus protein VP39"/>
    <property type="match status" value="1"/>
</dbReference>
<dbReference type="InterPro" id="IPR022749">
    <property type="entry name" value="D12N6_MeTrfase_N"/>
</dbReference>
<dbReference type="InterPro" id="IPR051537">
    <property type="entry name" value="DNA_Adenine_Mtase"/>
</dbReference>
<dbReference type="InterPro" id="IPR003356">
    <property type="entry name" value="DNA_methylase_A-5"/>
</dbReference>
<dbReference type="InterPro" id="IPR002052">
    <property type="entry name" value="DNA_methylase_N6_adenine_CS"/>
</dbReference>
<dbReference type="InterPro" id="IPR004546">
    <property type="entry name" value="Restrct_endonuc_T1M"/>
</dbReference>
<dbReference type="InterPro" id="IPR029063">
    <property type="entry name" value="SAM-dependent_MTases_sf"/>
</dbReference>
<dbReference type="InterPro" id="IPR038333">
    <property type="entry name" value="T1MK-like_N_sf"/>
</dbReference>
<dbReference type="NCBIfam" id="TIGR00497">
    <property type="entry name" value="hsdM"/>
    <property type="match status" value="1"/>
</dbReference>
<dbReference type="PANTHER" id="PTHR42933:SF1">
    <property type="entry name" value="SITE-SPECIFIC DNA-METHYLTRANSFERASE (ADENINE-SPECIFIC)"/>
    <property type="match status" value="1"/>
</dbReference>
<dbReference type="PANTHER" id="PTHR42933">
    <property type="entry name" value="SLR6095 PROTEIN"/>
    <property type="match status" value="1"/>
</dbReference>
<dbReference type="Pfam" id="PF12161">
    <property type="entry name" value="HsdM_N"/>
    <property type="match status" value="1"/>
</dbReference>
<dbReference type="Pfam" id="PF02384">
    <property type="entry name" value="N6_Mtase"/>
    <property type="match status" value="1"/>
</dbReference>
<dbReference type="PRINTS" id="PR00507">
    <property type="entry name" value="N12N6MTFRASE"/>
</dbReference>
<dbReference type="SUPFAM" id="SSF53335">
    <property type="entry name" value="S-adenosyl-L-methionine-dependent methyltransferases"/>
    <property type="match status" value="1"/>
</dbReference>
<dbReference type="PROSITE" id="PS00092">
    <property type="entry name" value="N6_MTASE"/>
    <property type="match status" value="1"/>
</dbReference>
<sequence length="520" mass="58015">MKMTSIQQRAELHRQIWQIANDVRGSVDGWDFKQYVLGALFYRFISENFSSYIEAGDDSICYAKLDDSVITDDIKDDAIKTKGYFIYPSQLFCNVAAKANTNDRLNADLNSIFVAIESSAYGYPSEADIKGLFADFDTTSNRLGNTVKDKNARLAAVLKGVEGLKLGDFNEHQIDLFGDAYEFLISNYAANAGKSGGEFFTPQHVSKLIAQLAMHGQTHVNKIYDPAAGSGSLLLQAKKQFDDHIIEEGFFGQEINHTTYNLARMNMFLHNINYDKFDIKLGNTLTEPHFRDEKPFDAIVSNPPYSVKWIGSDDPTLINDERFAPAGVLAPKSKADFAFVLHALNYLSAKGRAAIVCFPGIFYRGGAEQKIRQYLVDNNYVETVISLAPNLFFGTTIAVNILVLSKHKTDTKVQFIDASELFKKETNNNILTDAHIEQIMQVFASKEDVAHLAKSVAFETVVANDYNLSVSSYVEAKDTREIIDIAELNAELKTTVSKIDQLRKDIDAIVAEIEGCEVQK</sequence>
<organism>
    <name type="scientific">Escherichia coli</name>
    <dbReference type="NCBI Taxonomy" id="562"/>
    <lineage>
        <taxon>Bacteria</taxon>
        <taxon>Pseudomonadati</taxon>
        <taxon>Pseudomonadota</taxon>
        <taxon>Gammaproteobacteria</taxon>
        <taxon>Enterobacterales</taxon>
        <taxon>Enterobacteriaceae</taxon>
        <taxon>Escherichia</taxon>
    </lineage>
</organism>
<evidence type="ECO:0000250" key="1">
    <source>
        <dbReference type="UniProtKB" id="P08957"/>
    </source>
</evidence>
<evidence type="ECO:0000250" key="2">
    <source>
        <dbReference type="UniProtKB" id="Q89Z59"/>
    </source>
</evidence>
<evidence type="ECO:0000303" key="3">
    <source>
    </source>
</evidence>
<evidence type="ECO:0000303" key="4">
    <source>
    </source>
</evidence>
<evidence type="ECO:0000305" key="5"/>
<feature type="chain" id="PRO_0000088024" description="Type I restriction enzyme EcoprrI methylase subunit">
    <location>
        <begin position="1"/>
        <end position="520"/>
    </location>
</feature>
<feature type="binding site" evidence="2">
    <location>
        <begin position="198"/>
        <end position="203"/>
    </location>
    <ligand>
        <name>S-adenosyl-L-methionine</name>
        <dbReference type="ChEBI" id="CHEBI:59789"/>
    </ligand>
</feature>
<feature type="binding site" evidence="2">
    <location>
        <begin position="230"/>
        <end position="232"/>
    </location>
    <ligand>
        <name>S-adenosyl-L-methionine</name>
        <dbReference type="ChEBI" id="CHEBI:59789"/>
    </ligand>
</feature>
<feature type="binding site" evidence="2">
    <location>
        <position position="254"/>
    </location>
    <ligand>
        <name>S-adenosyl-L-methionine</name>
        <dbReference type="ChEBI" id="CHEBI:59789"/>
    </ligand>
</feature>
<reference key="1">
    <citation type="journal article" date="1994" name="J. Mol. Biol.">
        <title>The Escherichia coli prr region encodes a functional type IC DNA restriction system closely integrated with an anticodon nuclease gene.</title>
        <authorList>
            <person name="Tyndall C."/>
            <person name="Meister J."/>
            <person name="Bickle T.A."/>
        </authorList>
    </citation>
    <scope>NUCLEOTIDE SEQUENCE [GENOMIC DNA]</scope>
    <source>
        <strain>CTR5X</strain>
    </source>
</reference>
<reference key="2">
    <citation type="journal article" date="2003" name="Nucleic Acids Res.">
        <title>A nomenclature for restriction enzymes, DNA methyltransferases, homing endonucleases and their genes.</title>
        <authorList>
            <person name="Roberts R.J."/>
            <person name="Belfort M."/>
            <person name="Bestor T."/>
            <person name="Bhagwat A.S."/>
            <person name="Bickle T.A."/>
            <person name="Bitinaite J."/>
            <person name="Blumenthal R.M."/>
            <person name="Degtyarev S.K."/>
            <person name="Dryden D.T."/>
            <person name="Dybvig K."/>
            <person name="Firman K."/>
            <person name="Gromova E.S."/>
            <person name="Gumport R.I."/>
            <person name="Halford S.E."/>
            <person name="Hattman S."/>
            <person name="Heitman J."/>
            <person name="Hornby D.P."/>
            <person name="Janulaitis A."/>
            <person name="Jeltsch A."/>
            <person name="Josephsen J."/>
            <person name="Kiss A."/>
            <person name="Klaenhammer T.R."/>
            <person name="Kobayashi I."/>
            <person name="Kong H."/>
            <person name="Krueger D.H."/>
            <person name="Lacks S."/>
            <person name="Marinus M.G."/>
            <person name="Miyahara M."/>
            <person name="Morgan R.D."/>
            <person name="Murray N.E."/>
            <person name="Nagaraja V."/>
            <person name="Piekarowicz A."/>
            <person name="Pingoud A."/>
            <person name="Raleigh E."/>
            <person name="Rao D.N."/>
            <person name="Reich N."/>
            <person name="Repin V.E."/>
            <person name="Selker E.U."/>
            <person name="Shaw P.C."/>
            <person name="Stein D.C."/>
            <person name="Stoddard B.L."/>
            <person name="Szybalski W."/>
            <person name="Trautner T.A."/>
            <person name="Van Etten J.L."/>
            <person name="Vitor J.M."/>
            <person name="Wilson G.G."/>
            <person name="Xu S.Y."/>
        </authorList>
    </citation>
    <scope>NOMENCLATURE</scope>
    <scope>SUBTYPE</scope>
</reference>
<name>T1MP_ECOLX</name>